<feature type="initiator methionine" description="Removed" evidence="2">
    <location>
        <position position="1"/>
    </location>
</feature>
<feature type="chain" id="PRO_0000071689" description="ATP synthase subunit e, mitochondrial">
    <location>
        <begin position="2"/>
        <end position="96"/>
    </location>
</feature>
<feature type="modified residue" description="N-acetylserine" evidence="2">
    <location>
        <position position="2"/>
    </location>
</feature>
<gene>
    <name type="primary">TIM11</name>
    <name type="synonym">ATP21</name>
    <name type="ordered locus">YDR322C-A</name>
    <name type="ORF">YDR322BC</name>
</gene>
<comment type="function">
    <text>Mitochondrial membrane ATP synthase (F(1)F(0) ATP synthase or Complex V) produces ATP from ADP in the presence of a proton gradient across the membrane which is generated by electron transport complexes of the respiratory chain. F-type ATPases consist of two structural domains, F(1) - containing the extramembraneous catalytic core, and F(0) - containing the membrane proton channel, linked together by a central stalk and a peripheral stalk. During catalysis, ATP synthesis in the catalytic domain of F(1) is coupled via a rotary mechanism of the central stalk subunits to proton translocation. Part of the complex F(0) domain. Minor subunit located with subunit a in the membrane.</text>
</comment>
<comment type="subunit">
    <text>F-type ATPases have 2 components, CF(1) - the catalytic core - and CF(0) - the membrane proton channel. In yeast, the dimeric form of ATP synthase consists of 17 polypeptides: alpha, beta, gamma, delta, epsilon, 4 (B), 5 (OSCP), 6 (A), 8, 9 (C), d, E (Tim11), f, g, h, i/j and k.</text>
</comment>
<comment type="subcellular location">
    <subcellularLocation>
        <location>Mitochondrion</location>
    </subcellularLocation>
    <subcellularLocation>
        <location>Mitochondrion inner membrane</location>
    </subcellularLocation>
</comment>
<comment type="miscellaneous">
    <text evidence="1">Present with 4590 molecules/cell in log phase SD medium.</text>
</comment>
<comment type="similarity">
    <text evidence="3">Belongs to the ATPase e subunit family.</text>
</comment>
<protein>
    <recommendedName>
        <fullName>ATP synthase subunit e, mitochondrial</fullName>
        <shortName>ATPase subunit e</shortName>
    </recommendedName>
    <alternativeName>
        <fullName>Translocase of the inner membrane protein 11</fullName>
    </alternativeName>
</protein>
<keyword id="KW-0007">Acetylation</keyword>
<keyword id="KW-0066">ATP synthesis</keyword>
<keyword id="KW-0138">CF(0)</keyword>
<keyword id="KW-0903">Direct protein sequencing</keyword>
<keyword id="KW-0375">Hydrogen ion transport</keyword>
<keyword id="KW-0406">Ion transport</keyword>
<keyword id="KW-0472">Membrane</keyword>
<keyword id="KW-0496">Mitochondrion</keyword>
<keyword id="KW-0999">Mitochondrion inner membrane</keyword>
<keyword id="KW-1185">Reference proteome</keyword>
<keyword id="KW-0813">Transport</keyword>
<proteinExistence type="evidence at protein level"/>
<accession>P81449</accession>
<accession>D6VSV5</accession>
<evidence type="ECO:0000269" key="1">
    <source>
    </source>
</evidence>
<evidence type="ECO:0000269" key="2">
    <source>
    </source>
</evidence>
<evidence type="ECO:0000305" key="3"/>
<name>ATPJ_YEAST</name>
<reference key="1">
    <citation type="journal article" date="1997" name="Nature">
        <title>The nucleotide sequence of Saccharomyces cerevisiae chromosome IV.</title>
        <authorList>
            <person name="Jacq C."/>
            <person name="Alt-Moerbe J."/>
            <person name="Andre B."/>
            <person name="Arnold W."/>
            <person name="Bahr A."/>
            <person name="Ballesta J.P.G."/>
            <person name="Bargues M."/>
            <person name="Baron L."/>
            <person name="Becker A."/>
            <person name="Biteau N."/>
            <person name="Bloecker H."/>
            <person name="Blugeon C."/>
            <person name="Boskovic J."/>
            <person name="Brandt P."/>
            <person name="Brueckner M."/>
            <person name="Buitrago M.J."/>
            <person name="Coster F."/>
            <person name="Delaveau T."/>
            <person name="del Rey F."/>
            <person name="Dujon B."/>
            <person name="Eide L.G."/>
            <person name="Garcia-Cantalejo J.M."/>
            <person name="Goffeau A."/>
            <person name="Gomez-Peris A."/>
            <person name="Granotier C."/>
            <person name="Hanemann V."/>
            <person name="Hankeln T."/>
            <person name="Hoheisel J.D."/>
            <person name="Jaeger W."/>
            <person name="Jimenez A."/>
            <person name="Jonniaux J.-L."/>
            <person name="Kraemer C."/>
            <person name="Kuester H."/>
            <person name="Laamanen P."/>
            <person name="Legros Y."/>
            <person name="Louis E.J."/>
            <person name="Moeller-Rieker S."/>
            <person name="Monnet A."/>
            <person name="Moro M."/>
            <person name="Mueller-Auer S."/>
            <person name="Nussbaumer B."/>
            <person name="Paricio N."/>
            <person name="Paulin L."/>
            <person name="Perea J."/>
            <person name="Perez-Alonso M."/>
            <person name="Perez-Ortin J.E."/>
            <person name="Pohl T.M."/>
            <person name="Prydz H."/>
            <person name="Purnelle B."/>
            <person name="Rasmussen S.W."/>
            <person name="Remacha M.A."/>
            <person name="Revuelta J.L."/>
            <person name="Rieger M."/>
            <person name="Salom D."/>
            <person name="Saluz H.P."/>
            <person name="Saiz J.E."/>
            <person name="Saren A.-M."/>
            <person name="Schaefer M."/>
            <person name="Scharfe M."/>
            <person name="Schmidt E.R."/>
            <person name="Schneider C."/>
            <person name="Scholler P."/>
            <person name="Schwarz S."/>
            <person name="Soler-Mira A."/>
            <person name="Urrestarazu L.A."/>
            <person name="Verhasselt P."/>
            <person name="Vissers S."/>
            <person name="Voet M."/>
            <person name="Volckaert G."/>
            <person name="Wagner G."/>
            <person name="Wambutt R."/>
            <person name="Wedler E."/>
            <person name="Wedler H."/>
            <person name="Woelfl S."/>
            <person name="Harris D.E."/>
            <person name="Bowman S."/>
            <person name="Brown D."/>
            <person name="Churcher C.M."/>
            <person name="Connor R."/>
            <person name="Dedman K."/>
            <person name="Gentles S."/>
            <person name="Hamlin N."/>
            <person name="Hunt S."/>
            <person name="Jones L."/>
            <person name="McDonald S."/>
            <person name="Murphy L.D."/>
            <person name="Niblett D."/>
            <person name="Odell C."/>
            <person name="Oliver K."/>
            <person name="Rajandream M.A."/>
            <person name="Richards C."/>
            <person name="Shore L."/>
            <person name="Walsh S.V."/>
            <person name="Barrell B.G."/>
            <person name="Dietrich F.S."/>
            <person name="Mulligan J.T."/>
            <person name="Allen E."/>
            <person name="Araujo R."/>
            <person name="Aviles E."/>
            <person name="Berno A."/>
            <person name="Carpenter J."/>
            <person name="Chen E."/>
            <person name="Cherry J.M."/>
            <person name="Chung E."/>
            <person name="Duncan M."/>
            <person name="Hunicke-Smith S."/>
            <person name="Hyman R.W."/>
            <person name="Komp C."/>
            <person name="Lashkari D."/>
            <person name="Lew H."/>
            <person name="Lin D."/>
            <person name="Mosedale D."/>
            <person name="Nakahara K."/>
            <person name="Namath A."/>
            <person name="Oefner P."/>
            <person name="Oh C."/>
            <person name="Petel F.X."/>
            <person name="Roberts D."/>
            <person name="Schramm S."/>
            <person name="Schroeder M."/>
            <person name="Shogren T."/>
            <person name="Shroff N."/>
            <person name="Winant A."/>
            <person name="Yelton M.A."/>
            <person name="Botstein D."/>
            <person name="Davis R.W."/>
            <person name="Johnston M."/>
            <person name="Andrews S."/>
            <person name="Brinkman R."/>
            <person name="Cooper J."/>
            <person name="Ding H."/>
            <person name="Du Z."/>
            <person name="Favello A."/>
            <person name="Fulton L."/>
            <person name="Gattung S."/>
            <person name="Greco T."/>
            <person name="Hallsworth K."/>
            <person name="Hawkins J."/>
            <person name="Hillier L.W."/>
            <person name="Jier M."/>
            <person name="Johnson D."/>
            <person name="Johnston L."/>
            <person name="Kirsten J."/>
            <person name="Kucaba T."/>
            <person name="Langston Y."/>
            <person name="Latreille P."/>
            <person name="Le T."/>
            <person name="Mardis E."/>
            <person name="Menezes S."/>
            <person name="Miller N."/>
            <person name="Nhan M."/>
            <person name="Pauley A."/>
            <person name="Peluso D."/>
            <person name="Rifkin L."/>
            <person name="Riles L."/>
            <person name="Taich A."/>
            <person name="Trevaskis E."/>
            <person name="Vignati D."/>
            <person name="Wilcox L."/>
            <person name="Wohldman P."/>
            <person name="Vaudin M."/>
            <person name="Wilson R."/>
            <person name="Waterston R."/>
            <person name="Albermann K."/>
            <person name="Hani J."/>
            <person name="Heumann K."/>
            <person name="Kleine K."/>
            <person name="Mewes H.-W."/>
            <person name="Zollner A."/>
            <person name="Zaccaria P."/>
        </authorList>
    </citation>
    <scope>NUCLEOTIDE SEQUENCE [LARGE SCALE GENOMIC DNA]</scope>
    <source>
        <strain>ATCC 204508 / S288c</strain>
    </source>
</reference>
<reference key="2">
    <citation type="journal article" date="2014" name="G3 (Bethesda)">
        <title>The reference genome sequence of Saccharomyces cerevisiae: Then and now.</title>
        <authorList>
            <person name="Engel S.R."/>
            <person name="Dietrich F.S."/>
            <person name="Fisk D.G."/>
            <person name="Binkley G."/>
            <person name="Balakrishnan R."/>
            <person name="Costanzo M.C."/>
            <person name="Dwight S.S."/>
            <person name="Hitz B.C."/>
            <person name="Karra K."/>
            <person name="Nash R.S."/>
            <person name="Weng S."/>
            <person name="Wong E.D."/>
            <person name="Lloyd P."/>
            <person name="Skrzypek M.S."/>
            <person name="Miyasato S.R."/>
            <person name="Simison M."/>
            <person name="Cherry J.M."/>
        </authorList>
    </citation>
    <scope>GENOME REANNOTATION</scope>
    <source>
        <strain>ATCC 204508 / S288c</strain>
    </source>
</reference>
<reference key="3">
    <citation type="journal article" date="2007" name="Genome Res.">
        <title>Approaching a complete repository of sequence-verified protein-encoding clones for Saccharomyces cerevisiae.</title>
        <authorList>
            <person name="Hu Y."/>
            <person name="Rolfs A."/>
            <person name="Bhullar B."/>
            <person name="Murthy T.V.S."/>
            <person name="Zhu C."/>
            <person name="Berger M.F."/>
            <person name="Camargo A.A."/>
            <person name="Kelley F."/>
            <person name="McCarron S."/>
            <person name="Jepson D."/>
            <person name="Richardson A."/>
            <person name="Raphael J."/>
            <person name="Moreira D."/>
            <person name="Taycher E."/>
            <person name="Zuo D."/>
            <person name="Mohr S."/>
            <person name="Kane M.F."/>
            <person name="Williamson J."/>
            <person name="Simpson A.J.G."/>
            <person name="Bulyk M.L."/>
            <person name="Harlow E."/>
            <person name="Marsischky G."/>
            <person name="Kolodner R.D."/>
            <person name="LaBaer J."/>
        </authorList>
    </citation>
    <scope>NUCLEOTIDE SEQUENCE [GENOMIC DNA]</scope>
    <source>
        <strain>ATCC 204508 / S288c</strain>
    </source>
</reference>
<reference key="4">
    <citation type="journal article" date="1998" name="EMBO J.">
        <title>Yeast mitochondrial F1F0-ATPase exists as a dimer: identification of three dimer-specific subunits.</title>
        <authorList>
            <person name="Arnold I."/>
            <person name="Pfeiffer K."/>
            <person name="Neupert W."/>
            <person name="Stuart R.A."/>
            <person name="Schaegger H."/>
        </authorList>
    </citation>
    <scope>IDENTIFICATION</scope>
    <scope>PROTEIN SEQUENCE OF 2-14</scope>
    <scope>CLEAVAGE OF INITIATOR METHIONINE</scope>
    <scope>ACETYLATION AT SER-2</scope>
    <source>
        <strain>ATCC 208353 / W303-1A</strain>
    </source>
</reference>
<reference key="5">
    <citation type="journal article" date="1997" name="FEBS Lett.">
        <title>Yeast mitochondrial F1F0-ATPase: the novel subunit e is identical to Tim11.</title>
        <authorList>
            <person name="Arnold I."/>
            <person name="Bauer M.F."/>
            <person name="Brunner M."/>
            <person name="Neupert W."/>
            <person name="Stuart R.A."/>
        </authorList>
    </citation>
    <scope>IDENTIFICATION</scope>
</reference>
<reference key="6">
    <citation type="journal article" date="2003" name="Nature">
        <title>Global analysis of protein expression in yeast.</title>
        <authorList>
            <person name="Ghaemmaghami S."/>
            <person name="Huh W.-K."/>
            <person name="Bower K."/>
            <person name="Howson R.W."/>
            <person name="Belle A."/>
            <person name="Dephoure N."/>
            <person name="O'Shea E.K."/>
            <person name="Weissman J.S."/>
        </authorList>
    </citation>
    <scope>LEVEL OF PROTEIN EXPRESSION [LARGE SCALE ANALYSIS]</scope>
</reference>
<dbReference type="EMBL" id="U32517">
    <property type="status" value="NOT_ANNOTATED_CDS"/>
    <property type="molecule type" value="Genomic_DNA"/>
</dbReference>
<dbReference type="EMBL" id="AY557720">
    <property type="protein sequence ID" value="AAS56046.1"/>
    <property type="molecule type" value="Genomic_DNA"/>
</dbReference>
<dbReference type="EMBL" id="BK006938">
    <property type="protein sequence ID" value="DAA12165.1"/>
    <property type="molecule type" value="Genomic_DNA"/>
</dbReference>
<dbReference type="PIR" id="S78713">
    <property type="entry name" value="S78713"/>
</dbReference>
<dbReference type="RefSeq" id="NP_010609.1">
    <property type="nucleotide sequence ID" value="NM_001184348.1"/>
</dbReference>
<dbReference type="SMR" id="P81449"/>
<dbReference type="BioGRID" id="32380">
    <property type="interactions" value="73"/>
</dbReference>
<dbReference type="ComplexPortal" id="CPX-3281">
    <property type="entry name" value="Mitochondrial proton-transporting ATP synthase complex"/>
</dbReference>
<dbReference type="DIP" id="DIP-3029N"/>
<dbReference type="FunCoup" id="P81449">
    <property type="interactions" value="168"/>
</dbReference>
<dbReference type="IntAct" id="P81449">
    <property type="interactions" value="8"/>
</dbReference>
<dbReference type="MINT" id="P81449"/>
<dbReference type="STRING" id="4932.YDR322C-A"/>
<dbReference type="iPTMnet" id="P81449"/>
<dbReference type="PaxDb" id="4932-YDR322C-A"/>
<dbReference type="PeptideAtlas" id="P81449"/>
<dbReference type="EnsemblFungi" id="YDR322C-A_mRNA">
    <property type="protein sequence ID" value="YDR322C-A"/>
    <property type="gene ID" value="YDR322C-A"/>
</dbReference>
<dbReference type="GeneID" id="851922"/>
<dbReference type="KEGG" id="sce:YDR322C-A"/>
<dbReference type="AGR" id="SGD:S000007255"/>
<dbReference type="SGD" id="S000007255">
    <property type="gene designation" value="TIM11"/>
</dbReference>
<dbReference type="VEuPathDB" id="FungiDB:YDR322C-A"/>
<dbReference type="eggNOG" id="ENOG502SDS3">
    <property type="taxonomic scope" value="Eukaryota"/>
</dbReference>
<dbReference type="HOGENOM" id="CLU_159435_1_0_1"/>
<dbReference type="InParanoid" id="P81449"/>
<dbReference type="OMA" id="WARDHPS"/>
<dbReference type="OrthoDB" id="2125027at2759"/>
<dbReference type="BioCyc" id="YEAST:G3O-30090-MONOMER"/>
<dbReference type="BioGRID-ORCS" id="851922">
    <property type="hits" value="0 hits in 10 CRISPR screens"/>
</dbReference>
<dbReference type="PRO" id="PR:P81449"/>
<dbReference type="Proteomes" id="UP000002311">
    <property type="component" value="Chromosome IV"/>
</dbReference>
<dbReference type="RNAct" id="P81449">
    <property type="molecule type" value="protein"/>
</dbReference>
<dbReference type="GO" id="GO:0005743">
    <property type="term" value="C:mitochondrial inner membrane"/>
    <property type="evidence" value="ECO:0000314"/>
    <property type="project" value="ComplexPortal"/>
</dbReference>
<dbReference type="GO" id="GO:0005739">
    <property type="term" value="C:mitochondrion"/>
    <property type="evidence" value="ECO:0007005"/>
    <property type="project" value="SGD"/>
</dbReference>
<dbReference type="GO" id="GO:0045259">
    <property type="term" value="C:proton-transporting ATP synthase complex"/>
    <property type="evidence" value="ECO:0000315"/>
    <property type="project" value="SGD"/>
</dbReference>
<dbReference type="GO" id="GO:0015078">
    <property type="term" value="F:proton transmembrane transporter activity"/>
    <property type="evidence" value="ECO:0007669"/>
    <property type="project" value="InterPro"/>
</dbReference>
<dbReference type="GO" id="GO:0005198">
    <property type="term" value="F:structural molecule activity"/>
    <property type="evidence" value="ECO:0000315"/>
    <property type="project" value="SGD"/>
</dbReference>
<dbReference type="GO" id="GO:0042407">
    <property type="term" value="P:cristae formation"/>
    <property type="evidence" value="ECO:0000315"/>
    <property type="project" value="SGD"/>
</dbReference>
<dbReference type="GO" id="GO:0065003">
    <property type="term" value="P:protein-containing complex assembly"/>
    <property type="evidence" value="ECO:0000315"/>
    <property type="project" value="SGD"/>
</dbReference>
<dbReference type="GO" id="GO:0015986">
    <property type="term" value="P:proton motive force-driven ATP synthesis"/>
    <property type="evidence" value="ECO:0000314"/>
    <property type="project" value="ComplexPortal"/>
</dbReference>
<dbReference type="InterPro" id="IPR008386">
    <property type="entry name" value="ATP_synth_F0_esu_mt"/>
</dbReference>
<dbReference type="Pfam" id="PF05680">
    <property type="entry name" value="ATP-synt_E"/>
    <property type="match status" value="1"/>
</dbReference>
<organism>
    <name type="scientific">Saccharomyces cerevisiae (strain ATCC 204508 / S288c)</name>
    <name type="common">Baker's yeast</name>
    <dbReference type="NCBI Taxonomy" id="559292"/>
    <lineage>
        <taxon>Eukaryota</taxon>
        <taxon>Fungi</taxon>
        <taxon>Dikarya</taxon>
        <taxon>Ascomycota</taxon>
        <taxon>Saccharomycotina</taxon>
        <taxon>Saccharomycetes</taxon>
        <taxon>Saccharomycetales</taxon>
        <taxon>Saccharomycetaceae</taxon>
        <taxon>Saccharomyces</taxon>
    </lineage>
</organism>
<sequence length="96" mass="10876">MSTVNVLRYSALGLGLFFGFRNDMILKCNAKKKEEQAQYEEKLKLVEEAKKEYAKLHPVVTPKDVPANASFNLEDPNIDFERVILNAVESLKEAST</sequence>